<name>METE_CANAL</name>
<reference key="1">
    <citation type="journal article" date="2004" name="Proc. Natl. Acad. Sci. U.S.A.">
        <title>The diploid genome sequence of Candida albicans.</title>
        <authorList>
            <person name="Jones T."/>
            <person name="Federspiel N.A."/>
            <person name="Chibana H."/>
            <person name="Dungan J."/>
            <person name="Kalman S."/>
            <person name="Magee B.B."/>
            <person name="Newport G."/>
            <person name="Thorstenson Y.R."/>
            <person name="Agabian N."/>
            <person name="Magee P.T."/>
            <person name="Davis R.W."/>
            <person name="Scherer S."/>
        </authorList>
    </citation>
    <scope>NUCLEOTIDE SEQUENCE [LARGE SCALE GENOMIC DNA]</scope>
    <source>
        <strain>SC5314 / ATCC MYA-2876</strain>
    </source>
</reference>
<reference key="2">
    <citation type="journal article" date="2007" name="Genome Biol.">
        <title>Assembly of the Candida albicans genome into sixteen supercontigs aligned on the eight chromosomes.</title>
        <authorList>
            <person name="van het Hoog M."/>
            <person name="Rast T.J."/>
            <person name="Martchenko M."/>
            <person name="Grindle S."/>
            <person name="Dignard D."/>
            <person name="Hogues H."/>
            <person name="Cuomo C."/>
            <person name="Berriman M."/>
            <person name="Scherer S."/>
            <person name="Magee B.B."/>
            <person name="Whiteway M."/>
            <person name="Chibana H."/>
            <person name="Nantel A."/>
            <person name="Magee P.T."/>
        </authorList>
    </citation>
    <scope>GENOME REANNOTATION</scope>
    <source>
        <strain>SC5314 / ATCC MYA-2876</strain>
    </source>
</reference>
<reference key="3">
    <citation type="journal article" date="2013" name="Genome Biol.">
        <title>Assembly of a phased diploid Candida albicans genome facilitates allele-specific measurements and provides a simple model for repeat and indel structure.</title>
        <authorList>
            <person name="Muzzey D."/>
            <person name="Schwartz K."/>
            <person name="Weissman J.S."/>
            <person name="Sherlock G."/>
        </authorList>
    </citation>
    <scope>NUCLEOTIDE SEQUENCE [LARGE SCALE GENOMIC DNA]</scope>
    <scope>GENOME REANNOTATION</scope>
    <source>
        <strain>SC5314 / ATCC MYA-2876</strain>
    </source>
</reference>
<reference key="4">
    <citation type="journal article" date="2001" name="Proteomics">
        <title>Analysis of the serologic response to systemic Candida albicans infection in a murine model.</title>
        <authorList>
            <person name="Pitarch A."/>
            <person name="Diez-Orejas R."/>
            <person name="Molero G."/>
            <person name="Pardo M."/>
            <person name="Sanchez M."/>
            <person name="Gil C."/>
            <person name="Nombela C."/>
        </authorList>
    </citation>
    <scope>PROTEIN SEQUENCE OF 2-15</scope>
    <source>
        <strain>SC5314 / ATCC MYA-2876</strain>
    </source>
</reference>
<reference key="5">
    <citation type="journal article" date="2000" name="Electrophoresis">
        <title>Cross-species identification of novel Candida albicans immunogenic proteins by combination of two-dimensional polyacrylamide gel electrophoresis and mass spectrometry.</title>
        <authorList>
            <person name="Pardo M."/>
            <person name="Ward M."/>
            <person name="Pitarch A."/>
            <person name="Sanchez M."/>
            <person name="Nombela C."/>
            <person name="Blackstock W."/>
            <person name="Gil C."/>
        </authorList>
    </citation>
    <scope>PROTEIN SEQUENCE OF 411-421</scope>
    <scope>IDENTIFICATION BY MASS SPECTROMETRY</scope>
    <source>
        <strain>SC5314 / ATCC MYA-2876</strain>
    </source>
</reference>
<reference evidence="9 10 11 12" key="6">
    <citation type="journal article" date="2011" name="Arch. Biochem. Biophys.">
        <title>Structure of Candida albicans methionine synthase determined by employing surface residue mutagenesis.</title>
        <authorList>
            <person name="Ubhi D."/>
            <person name="Kavanagh K.L."/>
            <person name="Monzingo A.F."/>
            <person name="Robertus J.D."/>
        </authorList>
    </citation>
    <scope>X-RAY CRYSTALLOGRAPHY (1.98 ANGSTROMS) OF MUTANTS ALA-103/ALA-104/ALA-107; THR-103/THR-104/THR-107 AND TYR-103/TYR-104/TYR-107 AND IN COMPLEXES WITH ZINC</scope>
    <scope>FUNCTION</scope>
    <scope>CATALYTIC ACTIVITY</scope>
    <scope>COFACTOR</scope>
    <scope>PATHWAY</scope>
    <scope>MUTAGENESIS OF LYS-103; LYS-104 AND GLU-107</scope>
</reference>
<reference evidence="13 14 15 16 17 18" key="7">
    <citation type="journal article" date="2014" name="J. Mol. Biol.">
        <title>Structural analysis of a fungal methionine synthase with substrates and inhibitors.</title>
        <authorList>
            <person name="Ubhi D."/>
            <person name="Kago G."/>
            <person name="Monzingo A.F."/>
            <person name="Robertus J.D."/>
        </authorList>
    </citation>
    <scope>X-RAY CRYSTALLOGRAPHY (1.75 ANGSTROMS) IN COMPLEXES WITH 5-METHYLTETRAHYDROFOLATEGLUTAMATE; L-HOMOCYSTEINE; L-METHIONINE; METHOTREXATE INHIBITOR AND ZINC</scope>
    <scope>FUNCTION</scope>
    <scope>CATALYTIC ACTIVITY</scope>
    <scope>COFACTOR</scope>
    <scope>ACTIVITY REGULATION</scope>
    <scope>BIOPHYSICOCHEMICAL PROPERTIES</scope>
    <scope>PATHWAY</scope>
    <scope>MUTAGENESIS OF ASN-126 AND TYR-660</scope>
</reference>
<reference evidence="19" key="8">
    <citation type="journal article" date="2015" name="J. Mol. Biol.">
        <title>The cobalamin-independent methionine synthase enzyme captured in a substrate-induced closed conformation.</title>
        <authorList>
            <person name="Ubhi D.K."/>
            <person name="Robertus J.D."/>
        </authorList>
    </citation>
    <scope>X-RAY CRYSTALLOGRAPHY (2.98 ANGSTROMS) IN COMPLEX WITH 5-METHYLTETRAHYDROFOLATEGLUTAMATE; L-HOMOCYSTEINE AND ZINC</scope>
    <scope>FUNCTION</scope>
    <scope>CATALYTIC ACTIVITY</scope>
    <scope>COFACTOR</scope>
    <scope>PATHWAY</scope>
    <scope>ACTIVE SITE</scope>
    <scope>REACTION MECHANISM</scope>
    <scope>MUTAGENESIS OF MET-119; LYS-121; HIS-128; GLN-451; ARG-456; ARG-459 AND HIS-707</scope>
</reference>
<proteinExistence type="evidence at protein level"/>
<comment type="function">
    <text evidence="2 3 4">Catalyzes the transfer of a methyl group from 5-methyltetrahydrofolate to homocysteine resulting in methionine formation.</text>
</comment>
<comment type="catalytic activity">
    <reaction evidence="2 3 4">
        <text>5-methyltetrahydropteroyltri-L-glutamate + L-homocysteine = tetrahydropteroyltri-L-glutamate + L-methionine</text>
        <dbReference type="Rhea" id="RHEA:21196"/>
        <dbReference type="ChEBI" id="CHEBI:57844"/>
        <dbReference type="ChEBI" id="CHEBI:58140"/>
        <dbReference type="ChEBI" id="CHEBI:58199"/>
        <dbReference type="ChEBI" id="CHEBI:58207"/>
        <dbReference type="EC" id="2.1.1.14"/>
    </reaction>
</comment>
<comment type="cofactor">
    <cofactor evidence="2 3 4">
        <name>Zn(2+)</name>
        <dbReference type="ChEBI" id="CHEBI:29105"/>
    </cofactor>
    <text evidence="2 3 4">Binds 1 zinc ion per subunit.</text>
</comment>
<comment type="activity regulation">
    <text evidence="3">Inhibited weakly by methotrexate.</text>
</comment>
<comment type="biophysicochemical properties">
    <kinetics>
        <KM evidence="3">25 uM for homocysteine (at 37 degrees Celsius)</KM>
        <KM evidence="3">87 uM for 5-methyltetrahydrofolate-triglutamate (at 37 degrees Celsius)</KM>
        <text evidence="3">kcat is 25 min(-1) for homocysteine. kcat is 29 min(-1) for 5-methyl-tetrahydrofolate-triglutamate.</text>
    </kinetics>
</comment>
<comment type="pathway">
    <text evidence="2 3 4">Amino-acid biosynthesis; L-methionine biosynthesis via de novo pathway; L-methionine from L-homocysteine (MetE route): step 1/1.</text>
</comment>
<comment type="similarity">
    <text evidence="8">Belongs to the vitamin-B12 independent methionine synthase family.</text>
</comment>
<keyword id="KW-0002">3D-structure</keyword>
<keyword id="KW-0028">Amino-acid biosynthesis</keyword>
<keyword id="KW-0903">Direct protein sequencing</keyword>
<keyword id="KW-0479">Metal-binding</keyword>
<keyword id="KW-0486">Methionine biosynthesis</keyword>
<keyword id="KW-0489">Methyltransferase</keyword>
<keyword id="KW-1185">Reference proteome</keyword>
<keyword id="KW-0808">Transferase</keyword>
<keyword id="KW-0862">Zinc</keyword>
<protein>
    <recommendedName>
        <fullName evidence="5 6 7">5-methyltetrahydropteroyltriglutamate--homocysteine methyltransferase</fullName>
        <ecNumber evidence="2 3 4">2.1.1.14</ecNumber>
    </recommendedName>
    <alternativeName>
        <fullName evidence="5 6 7">Cobalamin-independent methionine synthase</fullName>
    </alternativeName>
    <alternativeName>
        <fullName>Methionine synthase, vitamin-B12 independent isozyme</fullName>
    </alternativeName>
</protein>
<gene>
    <name evidence="5 6" type="primary">MET6</name>
    <name type="ordered locus">CAALFM_CR01620CA</name>
    <name type="ORF">CaO19.10083</name>
    <name type="ORF">CaO19.2551</name>
</gene>
<sequence length="767" mass="85702">MVQSSVLGFPRIGGQRELKKITEAYWSGKATVEELLAKGKELREHNWKLQQKAGVDIIPSNDFSYYDQVLDLSLLFNAIPERYTKFDLAPIDVLFAMGRGLQKKATETQAAVDVTALEMVKWFDSNYHYVRPTFSHSTEFKLNTAAGIKPVDEFNEAKALGVQTRPVILGPVSYLYLGKADKDSLDLEPISLLPKILPVYKELLQKLKEAGAEQVQIDEPVLVLDLPEAVQSKFKEAYDALVGADVPELILTTYFGDVRPNLKAIENLPVAGFHFDFVRVPEQLDEVASILKDGQTLSAGVVDGRNIWKTDFAKASAVVQKAIEKVGKDKVVVATSSSLLHTPVDLESETKLDAVIKDWFSFATQKLDEVVVIAKNVSGEDVSKQLEANAASIKARSESSITNDPKVQERLTTINEALATRKAAFPERLTEQKAKYNLPLFPTTTIGSFPQTKDIRINRNKFAKGQITAEEYEAFINKEIETVVRFQEEIGLDVLVHGEPERNDMVQYFGEQLNGFAFTTNGWVQSYGSRYVRPPIIVGDVSRPKAMTVKESVYAQSITSKPMKGMLTGPVTILRWSFPRDDVSGKIQALQLGLALRDEVNDLEGAGITVIQVDEPAIREGLPLRAGKERSDYLNWAAQSFRVATSGVENSTQIHSHFCYSDLDPNHIKALDADVVSIEFSKKDDPNYIQEFSEYPNHIGLGLFDIHSPRIPSKQEFVSRIEEILKVYPASKFWVNPDCGLKTRGWPEVKESLTNMVEAAKEFRAKY</sequence>
<feature type="initiator methionine" description="Removed" evidence="1">
    <location>
        <position position="1"/>
    </location>
</feature>
<feature type="chain" id="PRO_0000098702" description="5-methyltetrahydropteroyltriglutamate--homocysteine methyltransferase">
    <location>
        <begin position="2"/>
        <end position="767"/>
    </location>
</feature>
<feature type="active site" description="Proton donor" evidence="4">
    <location>
        <position position="707"/>
    </location>
</feature>
<feature type="binding site" evidence="3 4 15 16 17 19">
    <location>
        <position position="19"/>
    </location>
    <ligand>
        <name>5-methyltetrahydropteroyltri-L-glutamate</name>
        <dbReference type="ChEBI" id="CHEBI:58207"/>
    </ligand>
</feature>
<feature type="binding site" evidence="3 4 16 17 19">
    <location>
        <position position="126"/>
    </location>
    <ligand>
        <name>5-methyltetrahydropteroyltri-L-glutamate</name>
        <dbReference type="ChEBI" id="CHEBI:58207"/>
    </ligand>
</feature>
<feature type="binding site" evidence="3 4 13 17 19">
    <location>
        <begin position="446"/>
        <end position="448"/>
    </location>
    <ligand>
        <name>L-homocysteine</name>
        <dbReference type="ChEBI" id="CHEBI:58199"/>
    </ligand>
</feature>
<feature type="binding site" evidence="3 14 16">
    <location>
        <begin position="446"/>
        <end position="448"/>
    </location>
    <ligand>
        <name>L-methionine</name>
        <dbReference type="ChEBI" id="CHEBI:57844"/>
    </ligand>
</feature>
<feature type="binding site" evidence="3 4 13 17 19">
    <location>
        <position position="499"/>
    </location>
    <ligand>
        <name>L-homocysteine</name>
        <dbReference type="ChEBI" id="CHEBI:58199"/>
    </ligand>
</feature>
<feature type="binding site" evidence="3 14 16">
    <location>
        <position position="499"/>
    </location>
    <ligand>
        <name>L-methionine</name>
        <dbReference type="ChEBI" id="CHEBI:57844"/>
    </ligand>
</feature>
<feature type="binding site" evidence="3 4 16 17 19">
    <location>
        <position position="504"/>
    </location>
    <ligand>
        <name>5-methyltetrahydropteroyltri-L-glutamate</name>
        <dbReference type="ChEBI" id="CHEBI:58207"/>
    </ligand>
</feature>
<feature type="binding site" evidence="3 4 15 16 17 19">
    <location>
        <position position="527"/>
    </location>
    <ligand>
        <name>5-methyltetrahydropteroyltri-L-glutamate</name>
        <dbReference type="ChEBI" id="CHEBI:58207"/>
    </ligand>
</feature>
<feature type="binding site" evidence="3 4 15 16 19">
    <location>
        <begin position="530"/>
        <end position="531"/>
    </location>
    <ligand>
        <name>5-methyltetrahydropteroyltri-L-glutamate</name>
        <dbReference type="ChEBI" id="CHEBI:58207"/>
    </ligand>
</feature>
<feature type="binding site" evidence="3 4 15 16 17 19">
    <location>
        <position position="576"/>
    </location>
    <ligand>
        <name>5-methyltetrahydropteroyltri-L-glutamate</name>
        <dbReference type="ChEBI" id="CHEBI:58207"/>
    </ligand>
</feature>
<feature type="binding site" evidence="3 4 13 17 19">
    <location>
        <position position="614"/>
    </location>
    <ligand>
        <name>L-homocysteine</name>
        <dbReference type="ChEBI" id="CHEBI:58199"/>
    </ligand>
</feature>
<feature type="binding site" evidence="3 14 16">
    <location>
        <position position="614"/>
    </location>
    <ligand>
        <name>L-methionine</name>
        <dbReference type="ChEBI" id="CHEBI:57844"/>
    </ligand>
</feature>
<feature type="binding site" evidence="2 3 4 9 11 13 14 15 16 17 18 19">
    <location>
        <position position="657"/>
    </location>
    <ligand>
        <name>Zn(2+)</name>
        <dbReference type="ChEBI" id="CHEBI:29105"/>
        <note>catalytic</note>
    </ligand>
</feature>
<feature type="binding site" evidence="2 3 4 9 11 13 14 15 16 17 18 19">
    <location>
        <position position="659"/>
    </location>
    <ligand>
        <name>Zn(2+)</name>
        <dbReference type="ChEBI" id="CHEBI:29105"/>
        <note>catalytic</note>
    </ligand>
</feature>
<feature type="binding site" evidence="2 3 11 14 15 18">
    <location>
        <position position="679"/>
    </location>
    <ligand>
        <name>Zn(2+)</name>
        <dbReference type="ChEBI" id="CHEBI:29105"/>
        <note>catalytic</note>
    </ligand>
</feature>
<feature type="binding site" evidence="2 3 4 9 11 13 14 15 16 17 18 19">
    <location>
        <position position="739"/>
    </location>
    <ligand>
        <name>Zn(2+)</name>
        <dbReference type="ChEBI" id="CHEBI:29105"/>
        <note>catalytic</note>
    </ligand>
</feature>
<feature type="mutagenesis site" description="No effect on catalytic activity; when associated with A-104 and A-107, or with T-104 and T-107, or with Y-104 and Y-107." evidence="2">
    <original>K</original>
    <variation>Y</variation>
    <variation>A</variation>
    <variation>T</variation>
    <location>
        <position position="103"/>
    </location>
</feature>
<feature type="mutagenesis site" description="No effect on catalytic activity; when associated with A-103 and A-107, or with T-103 and T-107, or with Y-103 and Y-107." evidence="2">
    <original>K</original>
    <variation>Y</variation>
    <variation>A</variation>
    <variation>T</variation>
    <location>
        <position position="104"/>
    </location>
</feature>
<feature type="mutagenesis site" description="No effect on catalytic activity; when associated with A-103 and A-104, or with T-103 and T-104, or with Y-103 and Y-104." evidence="2">
    <original>E</original>
    <variation>Y</variation>
    <variation>A</variation>
    <variation>T</variation>
    <location>
        <position position="107"/>
    </location>
</feature>
<feature type="mutagenesis site" description="22% of the catalytic activity of the wild-type." evidence="4">
    <original>M</original>
    <variation>A</variation>
    <location>
        <position position="119"/>
    </location>
</feature>
<feature type="mutagenesis site" description="Less than 5% of the catalytic activity of the wild-type." evidence="4">
    <original>K</original>
    <variation>A</variation>
    <location>
        <position position="121"/>
    </location>
</feature>
<feature type="mutagenesis site" description="Loss of catalytic activity." evidence="3">
    <original>N</original>
    <variation>A</variation>
    <location>
        <position position="126"/>
    </location>
</feature>
<feature type="mutagenesis site" description="26% of the catalytic activity of the wild-type." evidence="4">
    <original>H</original>
    <variation>A</variation>
    <location>
        <position position="128"/>
    </location>
</feature>
<feature type="mutagenesis site" description="Less than 5% of the catalytic activity of the wild-type." evidence="4">
    <original>Q</original>
    <variation>A</variation>
    <location>
        <position position="451"/>
    </location>
</feature>
<feature type="mutagenesis site" description="38% of the catalytic activity of the wild-type." evidence="4">
    <original>R</original>
    <variation>A</variation>
    <location>
        <position position="456"/>
    </location>
</feature>
<feature type="mutagenesis site" description="Less than 5% of the catalytic activity of the wild-type." evidence="4">
    <original>R</original>
    <variation>A</variation>
    <location>
        <position position="459"/>
    </location>
</feature>
<feature type="mutagenesis site" description="Loss of catalytic activity." evidence="3">
    <original>Y</original>
    <variation>A</variation>
    <variation>Q</variation>
    <location>
        <position position="660"/>
    </location>
</feature>
<feature type="mutagenesis site" description="No effect on catalytic activity." evidence="3">
    <original>Y</original>
    <variation>F</variation>
    <location>
        <position position="660"/>
    </location>
</feature>
<feature type="mutagenesis site" description="Less than 5% of the catalytic activity of the wild-type." evidence="4">
    <original>H</original>
    <variation>A</variation>
    <variation>K</variation>
    <location>
        <position position="707"/>
    </location>
</feature>
<feature type="sequence conflict" description="In Ref. 4; AA sequence." evidence="8" ref="4">
    <original>S</original>
    <variation>D</variation>
    <location>
        <position position="5"/>
    </location>
</feature>
<feature type="strand" evidence="25">
    <location>
        <begin position="3"/>
        <end position="5"/>
    </location>
</feature>
<feature type="helix" evidence="25">
    <location>
        <begin position="17"/>
        <end position="26"/>
    </location>
</feature>
<feature type="strand" evidence="23">
    <location>
        <begin position="28"/>
        <end position="30"/>
    </location>
</feature>
<feature type="helix" evidence="25">
    <location>
        <begin position="32"/>
        <end position="53"/>
    </location>
</feature>
<feature type="strand" evidence="25">
    <location>
        <begin position="59"/>
        <end position="61"/>
    </location>
</feature>
<feature type="helix" evidence="25">
    <location>
        <begin position="68"/>
        <end position="75"/>
    </location>
</feature>
<feature type="helix" evidence="25">
    <location>
        <begin position="81"/>
        <end position="84"/>
    </location>
</feature>
<feature type="helix" evidence="25">
    <location>
        <begin position="90"/>
        <end position="99"/>
    </location>
</feature>
<feature type="strand" evidence="25">
    <location>
        <begin position="101"/>
        <end position="103"/>
    </location>
</feature>
<feature type="strand" evidence="22">
    <location>
        <begin position="107"/>
        <end position="109"/>
    </location>
</feature>
<feature type="strand" evidence="25">
    <location>
        <begin position="112"/>
        <end position="114"/>
    </location>
</feature>
<feature type="strand" evidence="25">
    <location>
        <begin position="119"/>
        <end position="121"/>
    </location>
</feature>
<feature type="strand" evidence="25">
    <location>
        <begin position="128"/>
        <end position="130"/>
    </location>
</feature>
<feature type="helix" evidence="25">
    <location>
        <begin position="144"/>
        <end position="146"/>
    </location>
</feature>
<feature type="helix" evidence="25">
    <location>
        <begin position="149"/>
        <end position="159"/>
    </location>
</feature>
<feature type="strand" evidence="25">
    <location>
        <begin position="165"/>
        <end position="169"/>
    </location>
</feature>
<feature type="helix" evidence="25">
    <location>
        <begin position="171"/>
        <end position="176"/>
    </location>
</feature>
<feature type="strand" evidence="20">
    <location>
        <begin position="178"/>
        <end position="180"/>
    </location>
</feature>
<feature type="helix" evidence="25">
    <location>
        <begin position="182"/>
        <end position="184"/>
    </location>
</feature>
<feature type="helix" evidence="25">
    <location>
        <begin position="189"/>
        <end position="192"/>
    </location>
</feature>
<feature type="helix" evidence="25">
    <location>
        <begin position="193"/>
        <end position="210"/>
    </location>
</feature>
<feature type="strand" evidence="25">
    <location>
        <begin position="214"/>
        <end position="218"/>
    </location>
</feature>
<feature type="helix" evidence="25">
    <location>
        <begin position="220"/>
        <end position="223"/>
    </location>
</feature>
<feature type="helix" evidence="25">
    <location>
        <begin position="228"/>
        <end position="231"/>
    </location>
</feature>
<feature type="helix" evidence="25">
    <location>
        <begin position="233"/>
        <end position="241"/>
    </location>
</feature>
<feature type="strand" evidence="25">
    <location>
        <begin position="248"/>
        <end position="252"/>
    </location>
</feature>
<feature type="helix" evidence="25">
    <location>
        <begin position="259"/>
        <end position="261"/>
    </location>
</feature>
<feature type="helix" evidence="25">
    <location>
        <begin position="262"/>
        <end position="265"/>
    </location>
</feature>
<feature type="strand" evidence="25">
    <location>
        <begin position="271"/>
        <end position="276"/>
    </location>
</feature>
<feature type="turn" evidence="25">
    <location>
        <begin position="277"/>
        <end position="279"/>
    </location>
</feature>
<feature type="helix" evidence="25">
    <location>
        <begin position="281"/>
        <end position="283"/>
    </location>
</feature>
<feature type="helix" evidence="25">
    <location>
        <begin position="284"/>
        <end position="289"/>
    </location>
</feature>
<feature type="strand" evidence="25">
    <location>
        <begin position="296"/>
        <end position="302"/>
    </location>
</feature>
<feature type="helix" evidence="25">
    <location>
        <begin position="312"/>
        <end position="326"/>
    </location>
</feature>
<feature type="helix" evidence="25">
    <location>
        <begin position="328"/>
        <end position="330"/>
    </location>
</feature>
<feature type="strand" evidence="25">
    <location>
        <begin position="331"/>
        <end position="337"/>
    </location>
</feature>
<feature type="helix" evidence="25">
    <location>
        <begin position="339"/>
        <end position="341"/>
    </location>
</feature>
<feature type="helix" evidence="25">
    <location>
        <begin position="346"/>
        <end position="348"/>
    </location>
</feature>
<feature type="strand" evidence="25">
    <location>
        <begin position="350"/>
        <end position="352"/>
    </location>
</feature>
<feature type="helix" evidence="25">
    <location>
        <begin position="354"/>
        <end position="357"/>
    </location>
</feature>
<feature type="helix" evidence="25">
    <location>
        <begin position="363"/>
        <end position="377"/>
    </location>
</feature>
<feature type="helix" evidence="25">
    <location>
        <begin position="383"/>
        <end position="398"/>
    </location>
</feature>
<feature type="turn" evidence="25">
    <location>
        <begin position="400"/>
        <end position="402"/>
    </location>
</feature>
<feature type="helix" evidence="25">
    <location>
        <begin position="405"/>
        <end position="412"/>
    </location>
</feature>
<feature type="helix" evidence="25">
    <location>
        <begin position="417"/>
        <end position="419"/>
    </location>
</feature>
<feature type="helix" evidence="25">
    <location>
        <begin position="425"/>
        <end position="436"/>
    </location>
</feature>
<feature type="helix" evidence="25">
    <location>
        <begin position="453"/>
        <end position="463"/>
    </location>
</feature>
<feature type="helix" evidence="25">
    <location>
        <begin position="469"/>
        <end position="489"/>
    </location>
</feature>
<feature type="strand" evidence="25">
    <location>
        <begin position="493"/>
        <end position="495"/>
    </location>
</feature>
<feature type="helix" evidence="25">
    <location>
        <begin position="507"/>
        <end position="510"/>
    </location>
</feature>
<feature type="strand" evidence="25">
    <location>
        <begin position="513"/>
        <end position="517"/>
    </location>
</feature>
<feature type="strand" evidence="25">
    <location>
        <begin position="524"/>
        <end position="527"/>
    </location>
</feature>
<feature type="strand" evidence="25">
    <location>
        <begin position="530"/>
        <end position="532"/>
    </location>
</feature>
<feature type="strand" evidence="25">
    <location>
        <begin position="536"/>
        <end position="542"/>
    </location>
</feature>
<feature type="helix" evidence="25">
    <location>
        <begin position="549"/>
        <end position="557"/>
    </location>
</feature>
<feature type="strand" evidence="25">
    <location>
        <begin position="563"/>
        <end position="568"/>
    </location>
</feature>
<feature type="helix" evidence="25">
    <location>
        <begin position="570"/>
        <end position="575"/>
    </location>
</feature>
<feature type="strand" evidence="25">
    <location>
        <begin position="581"/>
        <end position="583"/>
    </location>
</feature>
<feature type="helix" evidence="25">
    <location>
        <begin position="585"/>
        <end position="605"/>
    </location>
</feature>
<feature type="strand" evidence="25">
    <location>
        <begin position="610"/>
        <end position="614"/>
    </location>
</feature>
<feature type="helix" evidence="25">
    <location>
        <begin position="618"/>
        <end position="621"/>
    </location>
</feature>
<feature type="strand" evidence="25">
    <location>
        <begin position="624"/>
        <end position="627"/>
    </location>
</feature>
<feature type="helix" evidence="25">
    <location>
        <begin position="628"/>
        <end position="645"/>
    </location>
</feature>
<feature type="strand" evidence="21">
    <location>
        <begin position="646"/>
        <end position="648"/>
    </location>
</feature>
<feature type="strand" evidence="25">
    <location>
        <begin position="652"/>
        <end position="658"/>
    </location>
</feature>
<feature type="strand" evidence="20">
    <location>
        <begin position="660"/>
        <end position="662"/>
    </location>
</feature>
<feature type="helix" evidence="25">
    <location>
        <begin position="665"/>
        <end position="671"/>
    </location>
</feature>
<feature type="strand" evidence="25">
    <location>
        <begin position="674"/>
        <end position="678"/>
    </location>
</feature>
<feature type="strand" evidence="22">
    <location>
        <begin position="682"/>
        <end position="684"/>
    </location>
</feature>
<feature type="helix" evidence="25">
    <location>
        <begin position="686"/>
        <end position="690"/>
    </location>
</feature>
<feature type="turn" evidence="24">
    <location>
        <begin position="691"/>
        <end position="694"/>
    </location>
</feature>
<feature type="strand" evidence="25">
    <location>
        <begin position="697"/>
        <end position="701"/>
    </location>
</feature>
<feature type="strand" evidence="24">
    <location>
        <begin position="706"/>
        <end position="708"/>
    </location>
</feature>
<feature type="helix" evidence="25">
    <location>
        <begin position="714"/>
        <end position="725"/>
    </location>
</feature>
<feature type="helix" evidence="25">
    <location>
        <begin position="730"/>
        <end position="732"/>
    </location>
</feature>
<feature type="strand" evidence="25">
    <location>
        <begin position="733"/>
        <end position="735"/>
    </location>
</feature>
<feature type="turn" evidence="22">
    <location>
        <begin position="740"/>
        <end position="743"/>
    </location>
</feature>
<feature type="helix" evidence="25">
    <location>
        <begin position="746"/>
        <end position="766"/>
    </location>
</feature>
<evidence type="ECO:0000269" key="1">
    <source>
    </source>
</evidence>
<evidence type="ECO:0000269" key="2">
    <source>
    </source>
</evidence>
<evidence type="ECO:0000269" key="3">
    <source>
    </source>
</evidence>
<evidence type="ECO:0000269" key="4">
    <source>
    </source>
</evidence>
<evidence type="ECO:0000303" key="5">
    <source>
    </source>
</evidence>
<evidence type="ECO:0000303" key="6">
    <source>
    </source>
</evidence>
<evidence type="ECO:0000303" key="7">
    <source>
    </source>
</evidence>
<evidence type="ECO:0000305" key="8"/>
<evidence type="ECO:0007744" key="9">
    <source>
        <dbReference type="PDB" id="3PPC"/>
    </source>
</evidence>
<evidence type="ECO:0007744" key="10">
    <source>
        <dbReference type="PDB" id="3PPF"/>
    </source>
</evidence>
<evidence type="ECO:0007744" key="11">
    <source>
        <dbReference type="PDB" id="3PPG"/>
    </source>
</evidence>
<evidence type="ECO:0007744" key="12">
    <source>
        <dbReference type="PDB" id="3PPH"/>
    </source>
</evidence>
<evidence type="ECO:0007744" key="13">
    <source>
        <dbReference type="PDB" id="4L5Z"/>
    </source>
</evidence>
<evidence type="ECO:0007744" key="14">
    <source>
        <dbReference type="PDB" id="4L61"/>
    </source>
</evidence>
<evidence type="ECO:0007744" key="15">
    <source>
        <dbReference type="PDB" id="4L64"/>
    </source>
</evidence>
<evidence type="ECO:0007744" key="16">
    <source>
        <dbReference type="PDB" id="4L65"/>
    </source>
</evidence>
<evidence type="ECO:0007744" key="17">
    <source>
        <dbReference type="PDB" id="4L6H"/>
    </source>
</evidence>
<evidence type="ECO:0007744" key="18">
    <source>
        <dbReference type="PDB" id="4L6O"/>
    </source>
</evidence>
<evidence type="ECO:0007744" key="19">
    <source>
        <dbReference type="PDB" id="4QQU"/>
    </source>
</evidence>
<evidence type="ECO:0007829" key="20">
    <source>
        <dbReference type="PDB" id="3PPC"/>
    </source>
</evidence>
<evidence type="ECO:0007829" key="21">
    <source>
        <dbReference type="PDB" id="3PPG"/>
    </source>
</evidence>
<evidence type="ECO:0007829" key="22">
    <source>
        <dbReference type="PDB" id="3PPH"/>
    </source>
</evidence>
<evidence type="ECO:0007829" key="23">
    <source>
        <dbReference type="PDB" id="4L5Z"/>
    </source>
</evidence>
<evidence type="ECO:0007829" key="24">
    <source>
        <dbReference type="PDB" id="4L61"/>
    </source>
</evidence>
<evidence type="ECO:0007829" key="25">
    <source>
        <dbReference type="PDB" id="4L6H"/>
    </source>
</evidence>
<accession>P82610</accession>
<accession>A0A1D8PS13</accession>
<accession>Q5A9B4</accession>
<dbReference type="EC" id="2.1.1.14" evidence="2 3 4"/>
<dbReference type="EMBL" id="CP017630">
    <property type="protein sequence ID" value="AOW30921.1"/>
    <property type="molecule type" value="Genomic_DNA"/>
</dbReference>
<dbReference type="RefSeq" id="XP_718219.1">
    <property type="nucleotide sequence ID" value="XM_713126.2"/>
</dbReference>
<dbReference type="PDB" id="3PPC">
    <property type="method" value="X-ray"/>
    <property type="resolution" value="2.20 A"/>
    <property type="chains" value="A/B=1-767"/>
</dbReference>
<dbReference type="PDB" id="3PPF">
    <property type="method" value="X-ray"/>
    <property type="resolution" value="2.30 A"/>
    <property type="chains" value="A=1-767"/>
</dbReference>
<dbReference type="PDB" id="3PPG">
    <property type="method" value="X-ray"/>
    <property type="resolution" value="1.98 A"/>
    <property type="chains" value="A=1-767"/>
</dbReference>
<dbReference type="PDB" id="3PPH">
    <property type="method" value="X-ray"/>
    <property type="resolution" value="2.80 A"/>
    <property type="chains" value="A/B=1-767"/>
</dbReference>
<dbReference type="PDB" id="4L5Z">
    <property type="method" value="X-ray"/>
    <property type="resolution" value="2.18 A"/>
    <property type="chains" value="A=1-767"/>
</dbReference>
<dbReference type="PDB" id="4L61">
    <property type="method" value="X-ray"/>
    <property type="resolution" value="2.13 A"/>
    <property type="chains" value="A=1-767"/>
</dbReference>
<dbReference type="PDB" id="4L64">
    <property type="method" value="X-ray"/>
    <property type="resolution" value="2.18 A"/>
    <property type="chains" value="A=1-767"/>
</dbReference>
<dbReference type="PDB" id="4L65">
    <property type="method" value="X-ray"/>
    <property type="resolution" value="2.31 A"/>
    <property type="chains" value="A=1-767"/>
</dbReference>
<dbReference type="PDB" id="4L6H">
    <property type="method" value="X-ray"/>
    <property type="resolution" value="1.75 A"/>
    <property type="chains" value="A=1-767"/>
</dbReference>
<dbReference type="PDB" id="4L6O">
    <property type="method" value="X-ray"/>
    <property type="resolution" value="1.88 A"/>
    <property type="chains" value="A=1-767"/>
</dbReference>
<dbReference type="PDB" id="4QQU">
    <property type="method" value="X-ray"/>
    <property type="resolution" value="2.98 A"/>
    <property type="chains" value="A=1-767"/>
</dbReference>
<dbReference type="PDBsum" id="3PPC"/>
<dbReference type="PDBsum" id="3PPF"/>
<dbReference type="PDBsum" id="3PPG"/>
<dbReference type="PDBsum" id="3PPH"/>
<dbReference type="PDBsum" id="4L5Z"/>
<dbReference type="PDBsum" id="4L61"/>
<dbReference type="PDBsum" id="4L64"/>
<dbReference type="PDBsum" id="4L65"/>
<dbReference type="PDBsum" id="4L6H"/>
<dbReference type="PDBsum" id="4L6O"/>
<dbReference type="PDBsum" id="4QQU"/>
<dbReference type="SMR" id="P82610"/>
<dbReference type="BioGRID" id="1223094">
    <property type="interactions" value="1"/>
</dbReference>
<dbReference type="FunCoup" id="P82610">
    <property type="interactions" value="620"/>
</dbReference>
<dbReference type="STRING" id="237561.P82610"/>
<dbReference type="EnsemblFungi" id="CR_01620C_A-T">
    <property type="protein sequence ID" value="CR_01620C_A-T-p1"/>
    <property type="gene ID" value="CR_01620C_A"/>
</dbReference>
<dbReference type="GeneID" id="3640084"/>
<dbReference type="KEGG" id="cal:CAALFM_CR01620CA"/>
<dbReference type="CGD" id="CAL0000186137">
    <property type="gene designation" value="MET6"/>
</dbReference>
<dbReference type="VEuPathDB" id="FungiDB:CR_01620C_A"/>
<dbReference type="eggNOG" id="KOG2263">
    <property type="taxonomic scope" value="Eukaryota"/>
</dbReference>
<dbReference type="HOGENOM" id="CLU_013175_0_0_1"/>
<dbReference type="InParanoid" id="P82610"/>
<dbReference type="OMA" id="KVMKGML"/>
<dbReference type="OrthoDB" id="1053771at2759"/>
<dbReference type="BRENDA" id="2.1.1.14">
    <property type="organism ID" value="1096"/>
</dbReference>
<dbReference type="UniPathway" id="UPA00051">
    <property type="reaction ID" value="UER00082"/>
</dbReference>
<dbReference type="EvolutionaryTrace" id="P82610"/>
<dbReference type="PRO" id="PR:P82610"/>
<dbReference type="Proteomes" id="UP000000559">
    <property type="component" value="Chromosome R"/>
</dbReference>
<dbReference type="GO" id="GO:0009986">
    <property type="term" value="C:cell surface"/>
    <property type="evidence" value="ECO:0000314"/>
    <property type="project" value="CGD"/>
</dbReference>
<dbReference type="GO" id="GO:0062040">
    <property type="term" value="C:fungal biofilm matrix"/>
    <property type="evidence" value="ECO:0000314"/>
    <property type="project" value="CGD"/>
</dbReference>
<dbReference type="GO" id="GO:0009277">
    <property type="term" value="C:fungal-type cell wall"/>
    <property type="evidence" value="ECO:0000314"/>
    <property type="project" value="CGD"/>
</dbReference>
<dbReference type="GO" id="GO:0030446">
    <property type="term" value="C:hyphal cell wall"/>
    <property type="evidence" value="ECO:0000314"/>
    <property type="project" value="CGD"/>
</dbReference>
<dbReference type="GO" id="GO:0005634">
    <property type="term" value="C:nucleus"/>
    <property type="evidence" value="ECO:0000314"/>
    <property type="project" value="CGD"/>
</dbReference>
<dbReference type="GO" id="GO:0003871">
    <property type="term" value="F:5-methyltetrahydropteroyltriglutamate-homocysteine S-methyltransferase activity"/>
    <property type="evidence" value="ECO:0000314"/>
    <property type="project" value="UniProtKB"/>
</dbReference>
<dbReference type="GO" id="GO:0008270">
    <property type="term" value="F:zinc ion binding"/>
    <property type="evidence" value="ECO:0000314"/>
    <property type="project" value="UniProtKB"/>
</dbReference>
<dbReference type="GO" id="GO:0071266">
    <property type="term" value="P:'de novo' L-methionine biosynthetic process"/>
    <property type="evidence" value="ECO:0000314"/>
    <property type="project" value="UniProtKB"/>
</dbReference>
<dbReference type="GO" id="GO:0034605">
    <property type="term" value="P:cellular response to heat"/>
    <property type="evidence" value="ECO:0000270"/>
    <property type="project" value="CGD"/>
</dbReference>
<dbReference type="GO" id="GO:0019280">
    <property type="term" value="P:L-methionine biosynthetic process from L-homoserine via O-acetyl-L-homoserine"/>
    <property type="evidence" value="ECO:0007669"/>
    <property type="project" value="EnsemblFungi"/>
</dbReference>
<dbReference type="GO" id="GO:0009086">
    <property type="term" value="P:methionine biosynthetic process"/>
    <property type="evidence" value="ECO:0000315"/>
    <property type="project" value="CGD"/>
</dbReference>
<dbReference type="GO" id="GO:0006555">
    <property type="term" value="P:methionine metabolic process"/>
    <property type="evidence" value="ECO:0000314"/>
    <property type="project" value="CGD"/>
</dbReference>
<dbReference type="GO" id="GO:0032259">
    <property type="term" value="P:methylation"/>
    <property type="evidence" value="ECO:0007669"/>
    <property type="project" value="UniProtKB-KW"/>
</dbReference>
<dbReference type="GO" id="GO:0052553">
    <property type="term" value="P:symbiont-mediated perturbation of host immune response"/>
    <property type="evidence" value="ECO:0000314"/>
    <property type="project" value="CGD"/>
</dbReference>
<dbReference type="CDD" id="cd03311">
    <property type="entry name" value="CIMS_C_terminal_like"/>
    <property type="match status" value="1"/>
</dbReference>
<dbReference type="CDD" id="cd03312">
    <property type="entry name" value="CIMS_N_terminal_like"/>
    <property type="match status" value="1"/>
</dbReference>
<dbReference type="FunFam" id="3.20.20.210:FF:000003">
    <property type="entry name" value="5-methyltetrahydropteroyltriglutamate--homocysteine methyltransferase"/>
    <property type="match status" value="1"/>
</dbReference>
<dbReference type="Gene3D" id="3.20.20.210">
    <property type="match status" value="2"/>
</dbReference>
<dbReference type="HAMAP" id="MF_00172">
    <property type="entry name" value="Meth_synth"/>
    <property type="match status" value="1"/>
</dbReference>
<dbReference type="InterPro" id="IPR013215">
    <property type="entry name" value="Cbl-indep_Met_Synth_N"/>
</dbReference>
<dbReference type="InterPro" id="IPR006276">
    <property type="entry name" value="Cobalamin-indep_Met_synthase"/>
</dbReference>
<dbReference type="InterPro" id="IPR002629">
    <property type="entry name" value="Met_Synth_C/arc"/>
</dbReference>
<dbReference type="InterPro" id="IPR038071">
    <property type="entry name" value="UROD/MetE-like_sf"/>
</dbReference>
<dbReference type="NCBIfam" id="TIGR01371">
    <property type="entry name" value="met_syn_B12ind"/>
    <property type="match status" value="1"/>
</dbReference>
<dbReference type="NCBIfam" id="NF003556">
    <property type="entry name" value="PRK05222.1"/>
    <property type="match status" value="1"/>
</dbReference>
<dbReference type="PANTHER" id="PTHR30519">
    <property type="entry name" value="5-METHYLTETRAHYDROPTEROYLTRIGLUTAMATE--HOMOCYSTEINE METHYLTRANSFERASE"/>
    <property type="match status" value="1"/>
</dbReference>
<dbReference type="Pfam" id="PF08267">
    <property type="entry name" value="Meth_synt_1"/>
    <property type="match status" value="1"/>
</dbReference>
<dbReference type="Pfam" id="PF01717">
    <property type="entry name" value="Meth_synt_2"/>
    <property type="match status" value="1"/>
</dbReference>
<dbReference type="PIRSF" id="PIRSF000382">
    <property type="entry name" value="MeTrfase_B12_ind"/>
    <property type="match status" value="1"/>
</dbReference>
<dbReference type="SUPFAM" id="SSF51726">
    <property type="entry name" value="UROD/MetE-like"/>
    <property type="match status" value="2"/>
</dbReference>
<organism>
    <name type="scientific">Candida albicans (strain SC5314 / ATCC MYA-2876)</name>
    <name type="common">Yeast</name>
    <dbReference type="NCBI Taxonomy" id="237561"/>
    <lineage>
        <taxon>Eukaryota</taxon>
        <taxon>Fungi</taxon>
        <taxon>Dikarya</taxon>
        <taxon>Ascomycota</taxon>
        <taxon>Saccharomycotina</taxon>
        <taxon>Pichiomycetes</taxon>
        <taxon>Debaryomycetaceae</taxon>
        <taxon>Candida/Lodderomyces clade</taxon>
        <taxon>Candida</taxon>
    </lineage>
</organism>